<accession>Q4KFA6</accession>
<comment type="function">
    <text evidence="1">Conversion of NADPH, generated by peripheral catabolic pathways, to NADH, which can enter the respiratory chain for energy generation.</text>
</comment>
<comment type="catalytic activity">
    <reaction evidence="1">
        <text>NAD(+) + NADPH = NADH + NADP(+)</text>
        <dbReference type="Rhea" id="RHEA:11692"/>
        <dbReference type="ChEBI" id="CHEBI:57540"/>
        <dbReference type="ChEBI" id="CHEBI:57783"/>
        <dbReference type="ChEBI" id="CHEBI:57945"/>
        <dbReference type="ChEBI" id="CHEBI:58349"/>
        <dbReference type="EC" id="1.6.1.1"/>
    </reaction>
</comment>
<comment type="cofactor">
    <cofactor evidence="1">
        <name>FAD</name>
        <dbReference type="ChEBI" id="CHEBI:57692"/>
    </cofactor>
    <text evidence="1">Binds 1 FAD per subunit.</text>
</comment>
<comment type="subcellular location">
    <subcellularLocation>
        <location evidence="1">Cytoplasm</location>
    </subcellularLocation>
</comment>
<comment type="similarity">
    <text evidence="1">Belongs to the class-I pyridine nucleotide-disulfide oxidoreductase family.</text>
</comment>
<dbReference type="EC" id="1.6.1.1" evidence="1"/>
<dbReference type="EMBL" id="CP000076">
    <property type="protein sequence ID" value="AAY91245.1"/>
    <property type="molecule type" value="Genomic_DNA"/>
</dbReference>
<dbReference type="RefSeq" id="WP_011060278.1">
    <property type="nucleotide sequence ID" value="NC_004129.6"/>
</dbReference>
<dbReference type="SMR" id="Q4KFA6"/>
<dbReference type="STRING" id="220664.PFL_1958"/>
<dbReference type="GeneID" id="57475003"/>
<dbReference type="KEGG" id="pfl:PFL_1958"/>
<dbReference type="PATRIC" id="fig|220664.5.peg.1998"/>
<dbReference type="eggNOG" id="COG1249">
    <property type="taxonomic scope" value="Bacteria"/>
</dbReference>
<dbReference type="HOGENOM" id="CLU_016755_0_0_6"/>
<dbReference type="Proteomes" id="UP000008540">
    <property type="component" value="Chromosome"/>
</dbReference>
<dbReference type="GO" id="GO:0005829">
    <property type="term" value="C:cytosol"/>
    <property type="evidence" value="ECO:0007669"/>
    <property type="project" value="TreeGrafter"/>
</dbReference>
<dbReference type="GO" id="GO:0004148">
    <property type="term" value="F:dihydrolipoyl dehydrogenase (NADH) activity"/>
    <property type="evidence" value="ECO:0007669"/>
    <property type="project" value="TreeGrafter"/>
</dbReference>
<dbReference type="GO" id="GO:0050660">
    <property type="term" value="F:flavin adenine dinucleotide binding"/>
    <property type="evidence" value="ECO:0007669"/>
    <property type="project" value="TreeGrafter"/>
</dbReference>
<dbReference type="GO" id="GO:0003957">
    <property type="term" value="F:NAD(P)+ transhydrogenase (Si-specific) activity"/>
    <property type="evidence" value="ECO:0007669"/>
    <property type="project" value="UniProtKB-UniRule"/>
</dbReference>
<dbReference type="GO" id="GO:0006103">
    <property type="term" value="P:2-oxoglutarate metabolic process"/>
    <property type="evidence" value="ECO:0007669"/>
    <property type="project" value="TreeGrafter"/>
</dbReference>
<dbReference type="GO" id="GO:0006739">
    <property type="term" value="P:NADP metabolic process"/>
    <property type="evidence" value="ECO:0007669"/>
    <property type="project" value="UniProtKB-UniRule"/>
</dbReference>
<dbReference type="FunFam" id="3.30.390.30:FF:000002">
    <property type="entry name" value="Soluble pyridine nucleotide transhydrogenase"/>
    <property type="match status" value="1"/>
</dbReference>
<dbReference type="FunFam" id="3.50.50.60:FF:000008">
    <property type="entry name" value="Soluble pyridine nucleotide transhydrogenase"/>
    <property type="match status" value="1"/>
</dbReference>
<dbReference type="Gene3D" id="3.30.390.30">
    <property type="match status" value="1"/>
</dbReference>
<dbReference type="Gene3D" id="3.50.50.60">
    <property type="entry name" value="FAD/NAD(P)-binding domain"/>
    <property type="match status" value="2"/>
</dbReference>
<dbReference type="HAMAP" id="MF_00247">
    <property type="entry name" value="SthA"/>
    <property type="match status" value="1"/>
</dbReference>
<dbReference type="InterPro" id="IPR050151">
    <property type="entry name" value="Class-I_Pyr_Nuc-Dis_Oxidored"/>
</dbReference>
<dbReference type="InterPro" id="IPR036188">
    <property type="entry name" value="FAD/NAD-bd_sf"/>
</dbReference>
<dbReference type="InterPro" id="IPR023753">
    <property type="entry name" value="FAD/NAD-binding_dom"/>
</dbReference>
<dbReference type="InterPro" id="IPR016156">
    <property type="entry name" value="FAD/NAD-linked_Rdtase_dimer_sf"/>
</dbReference>
<dbReference type="InterPro" id="IPR001100">
    <property type="entry name" value="Pyr_nuc-diS_OxRdtase"/>
</dbReference>
<dbReference type="InterPro" id="IPR004099">
    <property type="entry name" value="Pyr_nucl-diS_OxRdtase_dimer"/>
</dbReference>
<dbReference type="InterPro" id="IPR022962">
    <property type="entry name" value="STH_gammaproteobact"/>
</dbReference>
<dbReference type="NCBIfam" id="NF003585">
    <property type="entry name" value="PRK05249.1"/>
    <property type="match status" value="1"/>
</dbReference>
<dbReference type="PANTHER" id="PTHR22912">
    <property type="entry name" value="DISULFIDE OXIDOREDUCTASE"/>
    <property type="match status" value="1"/>
</dbReference>
<dbReference type="PANTHER" id="PTHR22912:SF93">
    <property type="entry name" value="SOLUBLE PYRIDINE NUCLEOTIDE TRANSHYDROGENASE"/>
    <property type="match status" value="1"/>
</dbReference>
<dbReference type="Pfam" id="PF07992">
    <property type="entry name" value="Pyr_redox_2"/>
    <property type="match status" value="1"/>
</dbReference>
<dbReference type="Pfam" id="PF02852">
    <property type="entry name" value="Pyr_redox_dim"/>
    <property type="match status" value="1"/>
</dbReference>
<dbReference type="PIRSF" id="PIRSF000350">
    <property type="entry name" value="Mercury_reductase_MerA"/>
    <property type="match status" value="1"/>
</dbReference>
<dbReference type="PRINTS" id="PR00368">
    <property type="entry name" value="FADPNR"/>
</dbReference>
<dbReference type="PRINTS" id="PR00411">
    <property type="entry name" value="PNDRDTASEI"/>
</dbReference>
<dbReference type="SUPFAM" id="SSF51905">
    <property type="entry name" value="FAD/NAD(P)-binding domain"/>
    <property type="match status" value="1"/>
</dbReference>
<dbReference type="SUPFAM" id="SSF55424">
    <property type="entry name" value="FAD/NAD-linked reductases, dimerisation (C-terminal) domain"/>
    <property type="match status" value="1"/>
</dbReference>
<keyword id="KW-0963">Cytoplasm</keyword>
<keyword id="KW-0274">FAD</keyword>
<keyword id="KW-0285">Flavoprotein</keyword>
<keyword id="KW-0520">NAD</keyword>
<keyword id="KW-0521">NADP</keyword>
<keyword id="KW-0560">Oxidoreductase</keyword>
<protein>
    <recommendedName>
        <fullName evidence="1">Soluble pyridine nucleotide transhydrogenase</fullName>
        <shortName evidence="1">STH</shortName>
        <ecNumber evidence="1">1.6.1.1</ecNumber>
    </recommendedName>
    <alternativeName>
        <fullName evidence="1">NAD(P)(+) transhydrogenase [B-specific]</fullName>
    </alternativeName>
</protein>
<gene>
    <name evidence="1" type="primary">sthA</name>
    <name type="ordered locus">PFL_1958</name>
</gene>
<organism>
    <name type="scientific">Pseudomonas fluorescens (strain ATCC BAA-477 / NRRL B-23932 / Pf-5)</name>
    <dbReference type="NCBI Taxonomy" id="220664"/>
    <lineage>
        <taxon>Bacteria</taxon>
        <taxon>Pseudomonadati</taxon>
        <taxon>Pseudomonadota</taxon>
        <taxon>Gammaproteobacteria</taxon>
        <taxon>Pseudomonadales</taxon>
        <taxon>Pseudomonadaceae</taxon>
        <taxon>Pseudomonas</taxon>
    </lineage>
</organism>
<feature type="chain" id="PRO_0000260238" description="Soluble pyridine nucleotide transhydrogenase">
    <location>
        <begin position="1"/>
        <end position="464"/>
    </location>
</feature>
<feature type="binding site" evidence="1">
    <location>
        <begin position="35"/>
        <end position="44"/>
    </location>
    <ligand>
        <name>FAD</name>
        <dbReference type="ChEBI" id="CHEBI:57692"/>
    </ligand>
</feature>
<reference key="1">
    <citation type="journal article" date="2005" name="Nat. Biotechnol.">
        <title>Complete genome sequence of the plant commensal Pseudomonas fluorescens Pf-5.</title>
        <authorList>
            <person name="Paulsen I.T."/>
            <person name="Press C.M."/>
            <person name="Ravel J."/>
            <person name="Kobayashi D.Y."/>
            <person name="Myers G.S.A."/>
            <person name="Mavrodi D.V."/>
            <person name="DeBoy R.T."/>
            <person name="Seshadri R."/>
            <person name="Ren Q."/>
            <person name="Madupu R."/>
            <person name="Dodson R.J."/>
            <person name="Durkin A.S."/>
            <person name="Brinkac L.M."/>
            <person name="Daugherty S.C."/>
            <person name="Sullivan S.A."/>
            <person name="Rosovitz M.J."/>
            <person name="Gwinn M.L."/>
            <person name="Zhou L."/>
            <person name="Schneider D.J."/>
            <person name="Cartinhour S.W."/>
            <person name="Nelson W.C."/>
            <person name="Weidman J."/>
            <person name="Watkins K."/>
            <person name="Tran K."/>
            <person name="Khouri H."/>
            <person name="Pierson E.A."/>
            <person name="Pierson L.S. III"/>
            <person name="Thomashow L.S."/>
            <person name="Loper J.E."/>
        </authorList>
    </citation>
    <scope>NUCLEOTIDE SEQUENCE [LARGE SCALE GENOMIC DNA]</scope>
    <source>
        <strain>ATCC BAA-477 / NRRL B-23932 / Pf-5</strain>
    </source>
</reference>
<name>STHA_PSEF5</name>
<sequence>MAVYNYDVVVLGSGPAGEGAAMNAAKAGRKVAMVDSRRQVGGNCTHLGTIPSKALRHSVRQIMQFNTNPMFRAIGEPRWFSFPDVLKSAEKVISKQVASRTGYYARNRVDVFFGTGSFADEQTVEVVCANGVVEKLVAKHIIIATGSRPYRPADIDFSHPRIYDSDTILSLGHTPRKLIVYGAGVIGCEYASIFSGLGVLVELVDNRGQLLSFLDSEISQALSYHFSNNNITVRHNEEYDRVEGVDNGVILHLKSGKKIKADALLWCNGRTGNTDKLGMENIGVKVNSRGQIEVDENYRTCVPNIYGAGDVIGWPSLASAAHDQGRSAAGSIVDNGSWRFVNDVPTGIYTIPEISSIGKNEQELTQAKVPYEVGKAFFKGMARAQIAGEPQGMLKILFHRETLEVLGVHCFGYQASEIVHIGQAIMSQPGELNTLKYFVNTTFNYPTMAEAYRVAAYDGLNRLF</sequence>
<proteinExistence type="inferred from homology"/>
<evidence type="ECO:0000255" key="1">
    <source>
        <dbReference type="HAMAP-Rule" id="MF_00247"/>
    </source>
</evidence>